<organism>
    <name type="scientific">Neisseria meningitidis serogroup C / serotype 2a (strain ATCC 700532 / DSM 15464 / FAM18)</name>
    <dbReference type="NCBI Taxonomy" id="272831"/>
    <lineage>
        <taxon>Bacteria</taxon>
        <taxon>Pseudomonadati</taxon>
        <taxon>Pseudomonadota</taxon>
        <taxon>Betaproteobacteria</taxon>
        <taxon>Neisseriales</taxon>
        <taxon>Neisseriaceae</taxon>
        <taxon>Neisseria</taxon>
    </lineage>
</organism>
<evidence type="ECO:0000255" key="1">
    <source>
        <dbReference type="HAMAP-Rule" id="MF_00121"/>
    </source>
</evidence>
<keyword id="KW-0067">ATP-binding</keyword>
<keyword id="KW-0436">Ligase</keyword>
<keyword id="KW-0547">Nucleotide-binding</keyword>
<keyword id="KW-0648">Protein biosynthesis</keyword>
<comment type="function">
    <text evidence="1">Allows the formation of correctly charged Asn-tRNA(Asn) or Gln-tRNA(Gln) through the transamidation of misacylated Asp-tRNA(Asn) or Glu-tRNA(Gln) in organisms which lack either or both of asparaginyl-tRNA or glutaminyl-tRNA synthetases. The reaction takes place in the presence of glutamine and ATP through an activated phospho-Asp-tRNA(Asn) or phospho-Glu-tRNA(Gln).</text>
</comment>
<comment type="catalytic activity">
    <reaction evidence="1">
        <text>L-glutamyl-tRNA(Gln) + L-glutamine + ATP + H2O = L-glutaminyl-tRNA(Gln) + L-glutamate + ADP + phosphate + H(+)</text>
        <dbReference type="Rhea" id="RHEA:17521"/>
        <dbReference type="Rhea" id="RHEA-COMP:9681"/>
        <dbReference type="Rhea" id="RHEA-COMP:9684"/>
        <dbReference type="ChEBI" id="CHEBI:15377"/>
        <dbReference type="ChEBI" id="CHEBI:15378"/>
        <dbReference type="ChEBI" id="CHEBI:29985"/>
        <dbReference type="ChEBI" id="CHEBI:30616"/>
        <dbReference type="ChEBI" id="CHEBI:43474"/>
        <dbReference type="ChEBI" id="CHEBI:58359"/>
        <dbReference type="ChEBI" id="CHEBI:78520"/>
        <dbReference type="ChEBI" id="CHEBI:78521"/>
        <dbReference type="ChEBI" id="CHEBI:456216"/>
    </reaction>
</comment>
<comment type="catalytic activity">
    <reaction evidence="1">
        <text>L-aspartyl-tRNA(Asn) + L-glutamine + ATP + H2O = L-asparaginyl-tRNA(Asn) + L-glutamate + ADP + phosphate + 2 H(+)</text>
        <dbReference type="Rhea" id="RHEA:14513"/>
        <dbReference type="Rhea" id="RHEA-COMP:9674"/>
        <dbReference type="Rhea" id="RHEA-COMP:9677"/>
        <dbReference type="ChEBI" id="CHEBI:15377"/>
        <dbReference type="ChEBI" id="CHEBI:15378"/>
        <dbReference type="ChEBI" id="CHEBI:29985"/>
        <dbReference type="ChEBI" id="CHEBI:30616"/>
        <dbReference type="ChEBI" id="CHEBI:43474"/>
        <dbReference type="ChEBI" id="CHEBI:58359"/>
        <dbReference type="ChEBI" id="CHEBI:78515"/>
        <dbReference type="ChEBI" id="CHEBI:78516"/>
        <dbReference type="ChEBI" id="CHEBI:456216"/>
    </reaction>
</comment>
<comment type="subunit">
    <text evidence="1">Heterotrimer of A, B and C subunits.</text>
</comment>
<comment type="similarity">
    <text evidence="1">Belongs to the GatB/GatE family. GatB subfamily.</text>
</comment>
<dbReference type="EC" id="6.3.5.-" evidence="1"/>
<dbReference type="EMBL" id="AM421808">
    <property type="protein sequence ID" value="CAM10523.1"/>
    <property type="molecule type" value="Genomic_DNA"/>
</dbReference>
<dbReference type="RefSeq" id="WP_002220838.1">
    <property type="nucleotide sequence ID" value="NC_008767.1"/>
</dbReference>
<dbReference type="SMR" id="A1KUI0"/>
<dbReference type="KEGG" id="nmc:NMC1293"/>
<dbReference type="HOGENOM" id="CLU_019240_0_0_4"/>
<dbReference type="Proteomes" id="UP000002286">
    <property type="component" value="Chromosome"/>
</dbReference>
<dbReference type="GO" id="GO:0050566">
    <property type="term" value="F:asparaginyl-tRNA synthase (glutamine-hydrolyzing) activity"/>
    <property type="evidence" value="ECO:0007669"/>
    <property type="project" value="RHEA"/>
</dbReference>
<dbReference type="GO" id="GO:0005524">
    <property type="term" value="F:ATP binding"/>
    <property type="evidence" value="ECO:0007669"/>
    <property type="project" value="UniProtKB-KW"/>
</dbReference>
<dbReference type="GO" id="GO:0050567">
    <property type="term" value="F:glutaminyl-tRNA synthase (glutamine-hydrolyzing) activity"/>
    <property type="evidence" value="ECO:0007669"/>
    <property type="project" value="UniProtKB-UniRule"/>
</dbReference>
<dbReference type="GO" id="GO:0070681">
    <property type="term" value="P:glutaminyl-tRNAGln biosynthesis via transamidation"/>
    <property type="evidence" value="ECO:0007669"/>
    <property type="project" value="TreeGrafter"/>
</dbReference>
<dbReference type="GO" id="GO:0006412">
    <property type="term" value="P:translation"/>
    <property type="evidence" value="ECO:0007669"/>
    <property type="project" value="UniProtKB-UniRule"/>
</dbReference>
<dbReference type="FunFam" id="1.10.10.410:FF:000001">
    <property type="entry name" value="Aspartyl/glutamyl-tRNA(Asn/Gln) amidotransferase subunit B"/>
    <property type="match status" value="1"/>
</dbReference>
<dbReference type="FunFam" id="1.10.150.380:FF:000001">
    <property type="entry name" value="Aspartyl/glutamyl-tRNA(Asn/Gln) amidotransferase subunit B"/>
    <property type="match status" value="1"/>
</dbReference>
<dbReference type="Gene3D" id="1.10.10.410">
    <property type="match status" value="1"/>
</dbReference>
<dbReference type="Gene3D" id="1.10.150.380">
    <property type="entry name" value="GatB domain, N-terminal subdomain"/>
    <property type="match status" value="1"/>
</dbReference>
<dbReference type="HAMAP" id="MF_00121">
    <property type="entry name" value="GatB"/>
    <property type="match status" value="1"/>
</dbReference>
<dbReference type="InterPro" id="IPR017959">
    <property type="entry name" value="Asn/Gln-tRNA_amidoTrfase_suB/E"/>
</dbReference>
<dbReference type="InterPro" id="IPR006075">
    <property type="entry name" value="Asn/Gln-tRNA_Trfase_suB/E_cat"/>
</dbReference>
<dbReference type="InterPro" id="IPR018027">
    <property type="entry name" value="Asn/Gln_amidotransferase"/>
</dbReference>
<dbReference type="InterPro" id="IPR003789">
    <property type="entry name" value="Asn/Gln_tRNA_amidoTrase-B-like"/>
</dbReference>
<dbReference type="InterPro" id="IPR004413">
    <property type="entry name" value="GatB"/>
</dbReference>
<dbReference type="InterPro" id="IPR042114">
    <property type="entry name" value="GatB_C_1"/>
</dbReference>
<dbReference type="InterPro" id="IPR023168">
    <property type="entry name" value="GatB_Yqey_C_2"/>
</dbReference>
<dbReference type="InterPro" id="IPR017958">
    <property type="entry name" value="Gln-tRNA_amidoTrfase_suB_CS"/>
</dbReference>
<dbReference type="InterPro" id="IPR014746">
    <property type="entry name" value="Gln_synth/guanido_kin_cat_dom"/>
</dbReference>
<dbReference type="NCBIfam" id="TIGR00133">
    <property type="entry name" value="gatB"/>
    <property type="match status" value="1"/>
</dbReference>
<dbReference type="NCBIfam" id="NF004012">
    <property type="entry name" value="PRK05477.1-2"/>
    <property type="match status" value="1"/>
</dbReference>
<dbReference type="NCBIfam" id="NF004014">
    <property type="entry name" value="PRK05477.1-4"/>
    <property type="match status" value="1"/>
</dbReference>
<dbReference type="NCBIfam" id="NF004015">
    <property type="entry name" value="PRK05477.1-5"/>
    <property type="match status" value="1"/>
</dbReference>
<dbReference type="PANTHER" id="PTHR11659">
    <property type="entry name" value="GLUTAMYL-TRNA GLN AMIDOTRANSFERASE SUBUNIT B MITOCHONDRIAL AND PROKARYOTIC PET112-RELATED"/>
    <property type="match status" value="1"/>
</dbReference>
<dbReference type="PANTHER" id="PTHR11659:SF0">
    <property type="entry name" value="GLUTAMYL-TRNA(GLN) AMIDOTRANSFERASE SUBUNIT B, MITOCHONDRIAL"/>
    <property type="match status" value="1"/>
</dbReference>
<dbReference type="Pfam" id="PF02934">
    <property type="entry name" value="GatB_N"/>
    <property type="match status" value="1"/>
</dbReference>
<dbReference type="Pfam" id="PF02637">
    <property type="entry name" value="GatB_Yqey"/>
    <property type="match status" value="1"/>
</dbReference>
<dbReference type="SMART" id="SM00845">
    <property type="entry name" value="GatB_Yqey"/>
    <property type="match status" value="1"/>
</dbReference>
<dbReference type="SUPFAM" id="SSF89095">
    <property type="entry name" value="GatB/YqeY motif"/>
    <property type="match status" value="1"/>
</dbReference>
<dbReference type="SUPFAM" id="SSF55931">
    <property type="entry name" value="Glutamine synthetase/guanido kinase"/>
    <property type="match status" value="1"/>
</dbReference>
<dbReference type="PROSITE" id="PS01234">
    <property type="entry name" value="GATB"/>
    <property type="match status" value="1"/>
</dbReference>
<feature type="chain" id="PRO_1000016007" description="Aspartyl/glutamyl-tRNA(Asn/Gln) amidotransferase subunit B">
    <location>
        <begin position="1"/>
        <end position="476"/>
    </location>
</feature>
<reference key="1">
    <citation type="journal article" date="2007" name="PLoS Genet.">
        <title>Meningococcal genetic variation mechanisms viewed through comparative analysis of serogroup C strain FAM18.</title>
        <authorList>
            <person name="Bentley S.D."/>
            <person name="Vernikos G.S."/>
            <person name="Snyder L.A.S."/>
            <person name="Churcher C."/>
            <person name="Arrowsmith C."/>
            <person name="Chillingworth T."/>
            <person name="Cronin A."/>
            <person name="Davis P.H."/>
            <person name="Holroyd N.E."/>
            <person name="Jagels K."/>
            <person name="Maddison M."/>
            <person name="Moule S."/>
            <person name="Rabbinowitsch E."/>
            <person name="Sharp S."/>
            <person name="Unwin L."/>
            <person name="Whitehead S."/>
            <person name="Quail M.A."/>
            <person name="Achtman M."/>
            <person name="Barrell B.G."/>
            <person name="Saunders N.J."/>
            <person name="Parkhill J."/>
        </authorList>
    </citation>
    <scope>NUCLEOTIDE SEQUENCE [LARGE SCALE GENOMIC DNA]</scope>
    <source>
        <strain>ATCC 700532 / DSM 15464 / FAM18</strain>
    </source>
</reference>
<sequence>MTWETVIGLEIHVQLNTKSKIFSGASTAFGAEPNAHASVVECALPGVLPVMNREVVEKAIKLGLALDAKINRKNVFDRKNYFYPDLPKGYQISQLDLPIVEHGKLEIVVGDDVKTINVTRAHMEEDAGKSVHEGLNGATGIDLNRAGTPLLEVVSEPELRSAAEAVAYAKALHSLVTWLDICDGNMAEGSFRVDANVSVRPKGQAEFGTRREIKNLNSFRFLEQAINYEAEAQIEILEDGSKVQQATMLFDPEKGETRVMRLKEDAQDYRYFPDPDLLPVIISDAQMQKAKAEMPELPKEMAARFVADYGVSEYDARLLTASRAQAAYFEEAAKASGQGKPTANWMNGELAAALNKAGLELADSPITAPRLAALVGKIADGTLSSKLAKKAFEAMWAEPESTIAEIIEKHGLQQMTDTGAVEAMVDEVLANNAKAVEQFKSGNEKALNAIVGQVMKASKGKANPAQVQELIKAKLA</sequence>
<protein>
    <recommendedName>
        <fullName evidence="1">Aspartyl/glutamyl-tRNA(Asn/Gln) amidotransferase subunit B</fullName>
        <shortName evidence="1">Asp/Glu-ADT subunit B</shortName>
        <ecNumber evidence="1">6.3.5.-</ecNumber>
    </recommendedName>
</protein>
<accession>A1KUI0</accession>
<proteinExistence type="inferred from homology"/>
<gene>
    <name evidence="1" type="primary">gatB</name>
    <name type="ordered locus">NMC1293</name>
</gene>
<name>GATB_NEIMF</name>